<keyword id="KW-1185">Reference proteome</keyword>
<keyword id="KW-0687">Ribonucleoprotein</keyword>
<keyword id="KW-0689">Ribosomal protein</keyword>
<organism>
    <name type="scientific">Methanococcus maripaludis (strain DSM 14266 / JCM 13030 / NBRC 101832 / S2 / LL)</name>
    <dbReference type="NCBI Taxonomy" id="267377"/>
    <lineage>
        <taxon>Archaea</taxon>
        <taxon>Methanobacteriati</taxon>
        <taxon>Methanobacteriota</taxon>
        <taxon>Methanomada group</taxon>
        <taxon>Methanococci</taxon>
        <taxon>Methanococcales</taxon>
        <taxon>Methanococcaceae</taxon>
        <taxon>Methanococcus</taxon>
    </lineage>
</organism>
<name>RL14E_METMP</name>
<comment type="similarity">
    <text evidence="1">Belongs to the eukaryotic ribosomal protein eL14 family.</text>
</comment>
<sequence length="77" mass="8349">MAAIEVGRVCIKTLGREAGNTCVIVEVLDKNFVVIDGSVKRRRCNLKHVEPTDKKVDLEKAASTEEVKLALDAAGLL</sequence>
<evidence type="ECO:0000255" key="1">
    <source>
        <dbReference type="HAMAP-Rule" id="MF_00721"/>
    </source>
</evidence>
<evidence type="ECO:0000305" key="2"/>
<accession>Q6LZK2</accession>
<protein>
    <recommendedName>
        <fullName evidence="1">Large ribosomal subunit protein eL14</fullName>
    </recommendedName>
    <alternativeName>
        <fullName evidence="2">50S ribosomal protein L14e</fullName>
    </alternativeName>
</protein>
<gene>
    <name evidence="1" type="primary">rpl14e</name>
    <name type="ordered locus">MMP0625</name>
</gene>
<feature type="chain" id="PRO_0000132048" description="Large ribosomal subunit protein eL14">
    <location>
        <begin position="1"/>
        <end position="77"/>
    </location>
</feature>
<reference key="1">
    <citation type="journal article" date="2004" name="J. Bacteriol.">
        <title>Complete genome sequence of the genetically tractable hydrogenotrophic methanogen Methanococcus maripaludis.</title>
        <authorList>
            <person name="Hendrickson E.L."/>
            <person name="Kaul R."/>
            <person name="Zhou Y."/>
            <person name="Bovee D."/>
            <person name="Chapman P."/>
            <person name="Chung J."/>
            <person name="Conway de Macario E."/>
            <person name="Dodsworth J.A."/>
            <person name="Gillett W."/>
            <person name="Graham D.E."/>
            <person name="Hackett M."/>
            <person name="Haydock A.K."/>
            <person name="Kang A."/>
            <person name="Land M.L."/>
            <person name="Levy R."/>
            <person name="Lie T.J."/>
            <person name="Major T.A."/>
            <person name="Moore B.C."/>
            <person name="Porat I."/>
            <person name="Palmeiri A."/>
            <person name="Rouse G."/>
            <person name="Saenphimmachak C."/>
            <person name="Soell D."/>
            <person name="Van Dien S."/>
            <person name="Wang T."/>
            <person name="Whitman W.B."/>
            <person name="Xia Q."/>
            <person name="Zhang Y."/>
            <person name="Larimer F.W."/>
            <person name="Olson M.V."/>
            <person name="Leigh J.A."/>
        </authorList>
    </citation>
    <scope>NUCLEOTIDE SEQUENCE [LARGE SCALE GENOMIC DNA]</scope>
    <source>
        <strain>DSM 14266 / JCM 13030 / NBRC 101832 / S2 / LL</strain>
    </source>
</reference>
<proteinExistence type="inferred from homology"/>
<dbReference type="EMBL" id="BX950229">
    <property type="protein sequence ID" value="CAF30181.1"/>
    <property type="molecule type" value="Genomic_DNA"/>
</dbReference>
<dbReference type="RefSeq" id="WP_011170569.1">
    <property type="nucleotide sequence ID" value="NC_005791.1"/>
</dbReference>
<dbReference type="SMR" id="Q6LZK2"/>
<dbReference type="STRING" id="267377.MMP0625"/>
<dbReference type="EnsemblBacteria" id="CAF30181">
    <property type="protein sequence ID" value="CAF30181"/>
    <property type="gene ID" value="MMP0625"/>
</dbReference>
<dbReference type="KEGG" id="mmp:MMP0625"/>
<dbReference type="PATRIC" id="fig|267377.15.peg.640"/>
<dbReference type="eggNOG" id="arCOG04167">
    <property type="taxonomic scope" value="Archaea"/>
</dbReference>
<dbReference type="HOGENOM" id="CLU_183474_0_0_2"/>
<dbReference type="OrthoDB" id="63594at2157"/>
<dbReference type="Proteomes" id="UP000000590">
    <property type="component" value="Chromosome"/>
</dbReference>
<dbReference type="GO" id="GO:0022625">
    <property type="term" value="C:cytosolic large ribosomal subunit"/>
    <property type="evidence" value="ECO:0007669"/>
    <property type="project" value="TreeGrafter"/>
</dbReference>
<dbReference type="GO" id="GO:0003723">
    <property type="term" value="F:RNA binding"/>
    <property type="evidence" value="ECO:0007669"/>
    <property type="project" value="InterPro"/>
</dbReference>
<dbReference type="GO" id="GO:0003735">
    <property type="term" value="F:structural constituent of ribosome"/>
    <property type="evidence" value="ECO:0007669"/>
    <property type="project" value="InterPro"/>
</dbReference>
<dbReference type="GO" id="GO:0042273">
    <property type="term" value="P:ribosomal large subunit biogenesis"/>
    <property type="evidence" value="ECO:0007669"/>
    <property type="project" value="TreeGrafter"/>
</dbReference>
<dbReference type="GO" id="GO:0006412">
    <property type="term" value="P:translation"/>
    <property type="evidence" value="ECO:0007669"/>
    <property type="project" value="UniProtKB-UniRule"/>
</dbReference>
<dbReference type="CDD" id="cd23702">
    <property type="entry name" value="eL14"/>
    <property type="match status" value="1"/>
</dbReference>
<dbReference type="Gene3D" id="2.30.30.30">
    <property type="match status" value="1"/>
</dbReference>
<dbReference type="HAMAP" id="MF_00721">
    <property type="entry name" value="Ribosomal_eL14"/>
    <property type="match status" value="1"/>
</dbReference>
<dbReference type="InterPro" id="IPR005824">
    <property type="entry name" value="KOW"/>
</dbReference>
<dbReference type="InterPro" id="IPR014722">
    <property type="entry name" value="Rib_uL2_dom2"/>
</dbReference>
<dbReference type="InterPro" id="IPR039660">
    <property type="entry name" value="Ribosomal_eL14"/>
</dbReference>
<dbReference type="InterPro" id="IPR023651">
    <property type="entry name" value="Ribosomal_eL14_arc"/>
</dbReference>
<dbReference type="InterPro" id="IPR008991">
    <property type="entry name" value="Translation_prot_SH3-like_sf"/>
</dbReference>
<dbReference type="NCBIfam" id="NF003320">
    <property type="entry name" value="PRK04333.1"/>
    <property type="match status" value="1"/>
</dbReference>
<dbReference type="PANTHER" id="PTHR11127">
    <property type="entry name" value="60S RIBOSOMAL PROTEIN L14"/>
    <property type="match status" value="1"/>
</dbReference>
<dbReference type="PANTHER" id="PTHR11127:SF2">
    <property type="entry name" value="LARGE RIBOSOMAL SUBUNIT PROTEIN EL14"/>
    <property type="match status" value="1"/>
</dbReference>
<dbReference type="Pfam" id="PF00467">
    <property type="entry name" value="KOW"/>
    <property type="match status" value="1"/>
</dbReference>
<dbReference type="SUPFAM" id="SSF50104">
    <property type="entry name" value="Translation proteins SH3-like domain"/>
    <property type="match status" value="1"/>
</dbReference>